<comment type="similarity">
    <text evidence="2">Belongs to the chlamydial CPn_1058/CT_355/TC_0634 family.</text>
</comment>
<proteinExistence type="inferred from homology"/>
<gene>
    <name type="ordered locus">TC_0634</name>
</gene>
<evidence type="ECO:0000255" key="1"/>
<evidence type="ECO:0000305" key="2"/>
<protein>
    <recommendedName>
        <fullName>Uncharacterized protein TC_0634</fullName>
    </recommendedName>
</protein>
<dbReference type="EMBL" id="AE002160">
    <property type="protein sequence ID" value="AAF39463.1"/>
    <property type="molecule type" value="Genomic_DNA"/>
</dbReference>
<dbReference type="PIR" id="E81680">
    <property type="entry name" value="E81680"/>
</dbReference>
<dbReference type="RefSeq" id="WP_010231076.1">
    <property type="nucleotide sequence ID" value="NZ_CP063055.1"/>
</dbReference>
<dbReference type="SMR" id="Q9PK39"/>
<dbReference type="GeneID" id="1245994"/>
<dbReference type="KEGG" id="cmu:TC_0634"/>
<dbReference type="eggNOG" id="COG0760">
    <property type="taxonomic scope" value="Bacteria"/>
</dbReference>
<dbReference type="HOGENOM" id="CLU_066871_0_0_0"/>
<dbReference type="OrthoDB" id="20874at2"/>
<dbReference type="Proteomes" id="UP000000800">
    <property type="component" value="Chromosome"/>
</dbReference>
<dbReference type="GO" id="GO:0003755">
    <property type="term" value="F:peptidyl-prolyl cis-trans isomerase activity"/>
    <property type="evidence" value="ECO:0007669"/>
    <property type="project" value="InterPro"/>
</dbReference>
<dbReference type="Gene3D" id="3.10.50.40">
    <property type="match status" value="1"/>
</dbReference>
<dbReference type="Gene3D" id="1.10.4030.10">
    <property type="entry name" value="Porin chaperone SurA, peptide-binding domain"/>
    <property type="match status" value="1"/>
</dbReference>
<dbReference type="InterPro" id="IPR046357">
    <property type="entry name" value="PPIase_dom_sf"/>
</dbReference>
<dbReference type="InterPro" id="IPR027304">
    <property type="entry name" value="Trigger_fact/SurA_dom_sf"/>
</dbReference>
<dbReference type="SUPFAM" id="SSF109998">
    <property type="entry name" value="Triger factor/SurA peptide-binding domain-like"/>
    <property type="match status" value="1"/>
</dbReference>
<feature type="signal peptide" evidence="1">
    <location>
        <begin position="1"/>
        <end position="24"/>
    </location>
</feature>
<feature type="chain" id="PRO_0000013760" description="Uncharacterized protein TC_0634">
    <location>
        <begin position="25"/>
        <end position="353"/>
    </location>
</feature>
<name>Y634_CHLMU</name>
<accession>Q9PK39</accession>
<keyword id="KW-0732">Signal</keyword>
<reference key="1">
    <citation type="journal article" date="2000" name="Nucleic Acids Res.">
        <title>Genome sequences of Chlamydia trachomatis MoPn and Chlamydia pneumoniae AR39.</title>
        <authorList>
            <person name="Read T.D."/>
            <person name="Brunham R.C."/>
            <person name="Shen C."/>
            <person name="Gill S.R."/>
            <person name="Heidelberg J.F."/>
            <person name="White O."/>
            <person name="Hickey E.K."/>
            <person name="Peterson J.D."/>
            <person name="Utterback T.R."/>
            <person name="Berry K.J."/>
            <person name="Bass S."/>
            <person name="Linher K.D."/>
            <person name="Weidman J.F."/>
            <person name="Khouri H.M."/>
            <person name="Craven B."/>
            <person name="Bowman C."/>
            <person name="Dodson R.J."/>
            <person name="Gwinn M.L."/>
            <person name="Nelson W.C."/>
            <person name="DeBoy R.T."/>
            <person name="Kolonay J.F."/>
            <person name="McClarty G."/>
            <person name="Salzberg S.L."/>
            <person name="Eisen J.A."/>
            <person name="Fraser C.M."/>
        </authorList>
    </citation>
    <scope>NUCLEOTIDE SEQUENCE [LARGE SCALE GENOMIC DNA]</scope>
    <source>
        <strain>MoPn / Nigg</strain>
    </source>
</reference>
<organism>
    <name type="scientific">Chlamydia muridarum (strain MoPn / Nigg)</name>
    <dbReference type="NCBI Taxonomy" id="243161"/>
    <lineage>
        <taxon>Bacteria</taxon>
        <taxon>Pseudomonadati</taxon>
        <taxon>Chlamydiota</taxon>
        <taxon>Chlamydiia</taxon>
        <taxon>Chlamydiales</taxon>
        <taxon>Chlamydiaceae</taxon>
        <taxon>Chlamydia/Chlamydophila group</taxon>
        <taxon>Chlamydia</taxon>
    </lineage>
</organism>
<sequence>MRVVKRIAVACYLGITIFSGIAFGYEGSFPSSSLEQNPSGVAIHNRVLFKIDEDTVVTTLDVIHKLNILFYSTCPQLVDSVSARSQYYSAMWPVVLESVINEFLMAADAKEKKIFIDPTSVNQEIEAMFGRDLSPFAKFFDMTPGDIFNVVHRVLVAQRIEGMMVRSRVMLKVTPGMVRDRYQKLVEDASQVSQWTYRVLTIKAGSELLANKIAGKVQERLNEGDSWDKERLAAMVLSQGGQLICSDEFIREDAQLSAAHKKALEEINFPEERCGKALEHASGLKLFVLFDCSTKTLEPLEKMEAQIKQRLMMELAEEEEANYKNKLRARYGFDPSIITQLLSEDAPQLFSLL</sequence>